<protein>
    <recommendedName>
        <fullName evidence="6">Alcohol dehydrogenase notN</fullName>
        <ecNumber evidence="7">1.1.1.1</ecNumber>
    </recommendedName>
    <alternativeName>
        <fullName evidence="6">Notoamide biosynthesis cluster protein N</fullName>
    </alternativeName>
</protein>
<keyword id="KW-0479">Metal-binding</keyword>
<keyword id="KW-0520">NAD</keyword>
<keyword id="KW-0521">NADP</keyword>
<keyword id="KW-0560">Oxidoreductase</keyword>
<keyword id="KW-0862">Zinc</keyword>
<name>NOTN_ASPSM</name>
<sequence length="339" mass="35912">MSLPQTYKRAVFKELGHPLTVEDAPLKLPGPNELLIKVEACGVCYSDMYSQYNGLGGGFPIVPGHEIIGKVAVVGSEVRDWNVGQRIGAGWHGGHDGTCKACKQGYFQMCDSTAVNGATKEGGYAEYTLIRSESAVHIPANVDAASYAPILCAGLTVFNSIRNVNIRAGETVAVQGLGGLGHLAIQYAKRMGYRVVAISRGPEKEAAARELGADEYIDSNEGDSGEQLAALGGAALAVTTASTGEAITPLLKGLGILGKLLVLSFPSNLTLEPTDLLKYGLSVHFWPSGHPSDAEDAVRFAENTNIASVVEKFPLEQAQQAFESMLSGKVRFRAVITMD</sequence>
<comment type="function">
    <text evidence="4 5 8">Alcohol dehydrogenase; part of the gene cluster that mediates the biosynthesis of notoamide, a fungal indole alkaloid that belongs to a family of natural products containing a characteristic bicyclo[2.2.2]diazaoctane core (PubMed:20722388). The first step of notoamide biosynthesis involves coupling of L-proline and L-tryptophan by the bimodular NRPS notE, to produce cyclo-L-tryptophan-L-proline called brevianamide F (PubMed:20722388). The reverse prenyltransferase notF then acts as a deoxybrevianamide E synthase and converts brevianamide F to deoxybrevianamide E via reverse prenylation at C-2 of the indole ring leading to the bicyclo[2.2.2]diazaoctane core (PubMed:20722388). Deoxybrevianamide E is further hydroxylated at C-6 of the indole ring, likely catalyzed by the cytochrome P450 monooxygenase notG, to yield 6-hydroxy-deoxybrevianamide E (Probable). 6-hydroxy-deoxybrevianamide E is a specific substrate of the prenyltransferase notC for normal prenylation at C-7 to produce 6-hydroxy-7-prenyl-deoxybrevianamide, also called notoamide S (PubMed:20722388). As the proposed pivotal branching point in notoamide biosynthesis, notoamide S can be diverted to notoamide E through an oxidative pyran ring closure putatively catalyzed by either notH cytochrome P450 monooxygenase or the notD FAD-linked oxidoreductase (Probable). This step would be followed by an indole 2,3-epoxidation-initiated pinacol-like rearrangement catalyzed by the notB FAD-dependent monooxygenase leading to the formation of notoamide C and notoamide D (PubMed:22188465). On the other hand notoamide S is converted to notoamide T by notH (or notD), a bifunctional oxidase that also functions as the intramolecular Diels-Alderase responsible for generation of (+)-notoamide T (Probable). To generate antipodal (-)-notoaminide T, notH' (or notD') in Aspergillus versicolor is expected to catalyze a Diels-Alder reaction leading to the opposite stereochemistry (Probable). The remaining oxidoreductase notD (or notH) likely catalyzes the oxidative pyran ring formation to yield (+)-stephacidin A (Probable). The FAD-dependent monooxygenase notI is highly similar to notB and is predicted to catalyze a similar conversion from (+)-stephacidin A to (-)-notoamide B via the 2,3-epoxidation of (+)-stephacidin A followed by a pinacol-type rearrangement (Probable). Finally, it remains unclear which enzyme could be responsible for the final hydroxylation steps leading to notoamide A and sclerotiamide (Probable). The function of notN in the notoamide biosynthesis has not been determined yet (Probable).</text>
</comment>
<comment type="catalytic activity">
    <reaction evidence="2">
        <text>a primary alcohol + NAD(+) = an aldehyde + NADH + H(+)</text>
        <dbReference type="Rhea" id="RHEA:10736"/>
        <dbReference type="ChEBI" id="CHEBI:15378"/>
        <dbReference type="ChEBI" id="CHEBI:15734"/>
        <dbReference type="ChEBI" id="CHEBI:17478"/>
        <dbReference type="ChEBI" id="CHEBI:57540"/>
        <dbReference type="ChEBI" id="CHEBI:57945"/>
        <dbReference type="EC" id="1.1.1.1"/>
    </reaction>
</comment>
<comment type="catalytic activity">
    <reaction evidence="2">
        <text>a secondary alcohol + NAD(+) = a ketone + NADH + H(+)</text>
        <dbReference type="Rhea" id="RHEA:10740"/>
        <dbReference type="ChEBI" id="CHEBI:15378"/>
        <dbReference type="ChEBI" id="CHEBI:17087"/>
        <dbReference type="ChEBI" id="CHEBI:35681"/>
        <dbReference type="ChEBI" id="CHEBI:57540"/>
        <dbReference type="ChEBI" id="CHEBI:57945"/>
        <dbReference type="EC" id="1.1.1.1"/>
    </reaction>
</comment>
<comment type="cofactor">
    <cofactor evidence="2">
        <name>Zn(2+)</name>
        <dbReference type="ChEBI" id="CHEBI:29105"/>
    </cofactor>
    <text evidence="2">Binds 2 Zn(2+) ions per subunit.</text>
</comment>
<comment type="biotechnology">
    <text evidence="3">Notoamides have been shown to exhibit antitumoral activities (PubMed:17304611). Notoamides A-C show moderate cytotoxicity against HeLa and L1210 cells with IC(50) values in the range of 22-52 mg/ml, but the IC(50) value of notoamide D is greater than 100 mg/ml (PubMed:17304611). Moreover, notoamide C induces G2/M-cell cycle arrest at a concentration of 6.3 mg/ml (PubMed:17304611).</text>
</comment>
<comment type="similarity">
    <text evidence="7">Belongs to the zinc-containing alcohol dehydrogenase family.</text>
</comment>
<gene>
    <name evidence="6" type="primary">notN</name>
</gene>
<evidence type="ECO:0000250" key="1">
    <source>
        <dbReference type="UniProtKB" id="P00327"/>
    </source>
</evidence>
<evidence type="ECO:0000250" key="2">
    <source>
        <dbReference type="UniProtKB" id="Q96533"/>
    </source>
</evidence>
<evidence type="ECO:0000269" key="3">
    <source>
    </source>
</evidence>
<evidence type="ECO:0000269" key="4">
    <source>
    </source>
</evidence>
<evidence type="ECO:0000269" key="5">
    <source>
    </source>
</evidence>
<evidence type="ECO:0000303" key="6">
    <source>
    </source>
</evidence>
<evidence type="ECO:0000305" key="7"/>
<evidence type="ECO:0000305" key="8">
    <source>
    </source>
</evidence>
<reference key="1">
    <citation type="journal article" date="2010" name="J. Am. Chem. Soc.">
        <title>Genome-based characterization of two prenylation steps in the assembly of the stephacidin and notoamide anticancer agents in a marine-derived Aspergillus sp.</title>
        <authorList>
            <person name="Ding Y."/>
            <person name="de Wet J.R."/>
            <person name="Cavalcoli J."/>
            <person name="Li S."/>
            <person name="Greshock T.J."/>
            <person name="Miller K.A."/>
            <person name="Finefield J.M."/>
            <person name="Sunderhaus J.D."/>
            <person name="McAfoos T.J."/>
            <person name="Tsukamoto S."/>
            <person name="Williams R.M."/>
            <person name="Sherman D.H."/>
        </authorList>
    </citation>
    <scope>NUCLEOTIDE SEQUENCE [GENOMIC DNA]</scope>
    <source>
        <strain>MF297-2</strain>
    </source>
</reference>
<reference key="2">
    <citation type="journal article" date="2007" name="Angew. Chem. Int. Ed.">
        <title>Notoamides A-D: prenylated indole alkaloids isolated from a marine-derived fungus, Aspergillus sp.</title>
        <authorList>
            <person name="Kato H."/>
            <person name="Yoshida T."/>
            <person name="Tokue T."/>
            <person name="Nojiri Y."/>
            <person name="Hirota H."/>
            <person name="Ohta T."/>
            <person name="Williams R.M."/>
            <person name="Tsukamoto S."/>
        </authorList>
    </citation>
    <scope>BIOTECHNOLOGY</scope>
</reference>
<reference key="3">
    <citation type="journal article" date="2012" name="J. Am. Chem. Soc.">
        <title>Biochemical characterization of NotB as an FAD-dependent oxidase in the biosynthesis of notoamide indole alkaloids.</title>
        <authorList>
            <person name="Li S."/>
            <person name="Finefield J.M."/>
            <person name="Sunderhaus J.D."/>
            <person name="McAfoos T.J."/>
            <person name="Williams R.M."/>
            <person name="Sherman D.H."/>
        </authorList>
    </citation>
    <scope>FUNCTION</scope>
</reference>
<reference key="4">
    <citation type="journal article" date="2012" name="Med. Chem. Commun.">
        <title>Comparative analysis of the biosynthetic systems for fungal bicyclo[2.2.2]diazaoctane indole alkaloids: the (+)/(-)-notoamide, paraherquamide and malbrancheamide pathways.</title>
        <authorList>
            <person name="Li S."/>
            <person name="Anand K."/>
            <person name="Tran H."/>
            <person name="Yu F."/>
            <person name="Finefield J.M."/>
            <person name="Sunderhaus J.D."/>
            <person name="McAfoos T.J."/>
            <person name="Tsukamoto S."/>
            <person name="Williams R.M."/>
            <person name="Sherman D.H."/>
        </authorList>
    </citation>
    <scope>FUNCTION</scope>
</reference>
<feature type="chain" id="PRO_0000448823" description="Alcohol dehydrogenase notN">
    <location>
        <begin position="1"/>
        <end position="339"/>
    </location>
</feature>
<feature type="binding site" evidence="2">
    <location>
        <position position="44"/>
    </location>
    <ligand>
        <name>Zn(2+)</name>
        <dbReference type="ChEBI" id="CHEBI:29105"/>
        <label>1</label>
        <note>catalytic</note>
    </ligand>
</feature>
<feature type="binding site" evidence="1">
    <location>
        <position position="65"/>
    </location>
    <ligand>
        <name>an alcohol</name>
        <dbReference type="ChEBI" id="CHEBI:30879"/>
    </ligand>
</feature>
<feature type="binding site" evidence="2">
    <location>
        <position position="65"/>
    </location>
    <ligand>
        <name>Zn(2+)</name>
        <dbReference type="ChEBI" id="CHEBI:29105"/>
        <label>1</label>
        <note>catalytic</note>
    </ligand>
</feature>
<feature type="binding site" evidence="2">
    <location>
        <position position="66"/>
    </location>
    <ligand>
        <name>Zn(2+)</name>
        <dbReference type="ChEBI" id="CHEBI:29105"/>
        <label>1</label>
        <note>catalytic</note>
    </ligand>
</feature>
<feature type="binding site" evidence="2">
    <location>
        <position position="99"/>
    </location>
    <ligand>
        <name>Zn(2+)</name>
        <dbReference type="ChEBI" id="CHEBI:29105"/>
        <label>2</label>
    </ligand>
</feature>
<feature type="binding site" evidence="2">
    <location>
        <position position="102"/>
    </location>
    <ligand>
        <name>Zn(2+)</name>
        <dbReference type="ChEBI" id="CHEBI:29105"/>
        <label>2</label>
    </ligand>
</feature>
<feature type="binding site" evidence="2">
    <location>
        <position position="110"/>
    </location>
    <ligand>
        <name>Zn(2+)</name>
        <dbReference type="ChEBI" id="CHEBI:29105"/>
        <label>2</label>
    </ligand>
</feature>
<feature type="binding site" evidence="2">
    <location>
        <position position="152"/>
    </location>
    <ligand>
        <name>Zn(2+)</name>
        <dbReference type="ChEBI" id="CHEBI:29105"/>
        <label>1</label>
        <note>catalytic</note>
    </ligand>
</feature>
<feature type="binding site" evidence="2">
    <location>
        <begin position="176"/>
        <end position="181"/>
    </location>
    <ligand>
        <name>NAD(+)</name>
        <dbReference type="ChEBI" id="CHEBI:57540"/>
    </ligand>
</feature>
<feature type="binding site" evidence="2">
    <location>
        <begin position="196"/>
        <end position="201"/>
    </location>
    <ligand>
        <name>NAD(+)</name>
        <dbReference type="ChEBI" id="CHEBI:57540"/>
    </ligand>
</feature>
<feature type="binding site" evidence="2">
    <location>
        <position position="204"/>
    </location>
    <ligand>
        <name>NAD(+)</name>
        <dbReference type="ChEBI" id="CHEBI:57540"/>
    </ligand>
</feature>
<feature type="binding site" evidence="2">
    <location>
        <begin position="263"/>
        <end position="265"/>
    </location>
    <ligand>
        <name>NAD(+)</name>
        <dbReference type="ChEBI" id="CHEBI:57540"/>
    </ligand>
</feature>
<feature type="binding site" evidence="2">
    <location>
        <begin position="287"/>
        <end position="289"/>
    </location>
    <ligand>
        <name>NAD(+)</name>
        <dbReference type="ChEBI" id="CHEBI:57540"/>
    </ligand>
</feature>
<feature type="binding site" evidence="2">
    <location>
        <begin position="295"/>
        <end position="297"/>
    </location>
    <ligand>
        <name>NAD(+)</name>
        <dbReference type="ChEBI" id="CHEBI:57540"/>
    </ligand>
</feature>
<accession>E1ACQ9</accession>
<proteinExistence type="evidence at protein level"/>
<organism>
    <name type="scientific">Aspergillus sp. (strain MF297-2)</name>
    <dbReference type="NCBI Taxonomy" id="877550"/>
    <lineage>
        <taxon>Eukaryota</taxon>
        <taxon>Fungi</taxon>
        <taxon>Dikarya</taxon>
        <taxon>Ascomycota</taxon>
        <taxon>Pezizomycotina</taxon>
        <taxon>Eurotiomycetes</taxon>
        <taxon>Eurotiomycetidae</taxon>
        <taxon>Eurotiales</taxon>
        <taxon>Aspergillaceae</taxon>
        <taxon>Aspergillus</taxon>
    </lineage>
</organism>
<dbReference type="EC" id="1.1.1.1" evidence="7"/>
<dbReference type="EMBL" id="HM622670">
    <property type="protein sequence ID" value="ADM34147.1"/>
    <property type="molecule type" value="Genomic_DNA"/>
</dbReference>
<dbReference type="SMR" id="E1ACQ9"/>
<dbReference type="GO" id="GO:0005737">
    <property type="term" value="C:cytoplasm"/>
    <property type="evidence" value="ECO:0007669"/>
    <property type="project" value="TreeGrafter"/>
</dbReference>
<dbReference type="GO" id="GO:0004022">
    <property type="term" value="F:alcohol dehydrogenase (NAD+) activity"/>
    <property type="evidence" value="ECO:0007669"/>
    <property type="project" value="UniProtKB-EC"/>
</dbReference>
<dbReference type="GO" id="GO:0008270">
    <property type="term" value="F:zinc ion binding"/>
    <property type="evidence" value="ECO:0007669"/>
    <property type="project" value="InterPro"/>
</dbReference>
<dbReference type="FunFam" id="3.40.50.720:FF:000039">
    <property type="entry name" value="Alcohol dehydrogenase AdhP"/>
    <property type="match status" value="1"/>
</dbReference>
<dbReference type="Gene3D" id="3.90.180.10">
    <property type="entry name" value="Medium-chain alcohol dehydrogenases, catalytic domain"/>
    <property type="match status" value="1"/>
</dbReference>
<dbReference type="Gene3D" id="3.40.50.720">
    <property type="entry name" value="NAD(P)-binding Rossmann-like Domain"/>
    <property type="match status" value="1"/>
</dbReference>
<dbReference type="InterPro" id="IPR013149">
    <property type="entry name" value="ADH-like_C"/>
</dbReference>
<dbReference type="InterPro" id="IPR013154">
    <property type="entry name" value="ADH-like_N"/>
</dbReference>
<dbReference type="InterPro" id="IPR002328">
    <property type="entry name" value="ADH_Zn_CS"/>
</dbReference>
<dbReference type="InterPro" id="IPR011032">
    <property type="entry name" value="GroES-like_sf"/>
</dbReference>
<dbReference type="InterPro" id="IPR036291">
    <property type="entry name" value="NAD(P)-bd_dom_sf"/>
</dbReference>
<dbReference type="InterPro" id="IPR020843">
    <property type="entry name" value="PKS_ER"/>
</dbReference>
<dbReference type="PANTHER" id="PTHR42940">
    <property type="entry name" value="ALCOHOL DEHYDROGENASE 1-RELATED"/>
    <property type="match status" value="1"/>
</dbReference>
<dbReference type="PANTHER" id="PTHR42940:SF7">
    <property type="entry name" value="ALCOHOL DEHYDROGENASE-LIKE N-TERMINAL DOMAIN-CONTAINING PROTEIN"/>
    <property type="match status" value="1"/>
</dbReference>
<dbReference type="Pfam" id="PF08240">
    <property type="entry name" value="ADH_N"/>
    <property type="match status" value="1"/>
</dbReference>
<dbReference type="Pfam" id="PF00107">
    <property type="entry name" value="ADH_zinc_N"/>
    <property type="match status" value="1"/>
</dbReference>
<dbReference type="SMART" id="SM00829">
    <property type="entry name" value="PKS_ER"/>
    <property type="match status" value="1"/>
</dbReference>
<dbReference type="SUPFAM" id="SSF50129">
    <property type="entry name" value="GroES-like"/>
    <property type="match status" value="1"/>
</dbReference>
<dbReference type="SUPFAM" id="SSF51735">
    <property type="entry name" value="NAD(P)-binding Rossmann-fold domains"/>
    <property type="match status" value="1"/>
</dbReference>
<dbReference type="PROSITE" id="PS00059">
    <property type="entry name" value="ADH_ZINC"/>
    <property type="match status" value="1"/>
</dbReference>